<organism>
    <name type="scientific">Streptococcus pyogenes serotype M3 (strain ATCC BAA-595 / MGAS315)</name>
    <dbReference type="NCBI Taxonomy" id="198466"/>
    <lineage>
        <taxon>Bacteria</taxon>
        <taxon>Bacillati</taxon>
        <taxon>Bacillota</taxon>
        <taxon>Bacilli</taxon>
        <taxon>Lactobacillales</taxon>
        <taxon>Streptococcaceae</taxon>
        <taxon>Streptococcus</taxon>
    </lineage>
</organism>
<evidence type="ECO:0000255" key="1">
    <source>
        <dbReference type="HAMAP-Rule" id="MF_00001"/>
    </source>
</evidence>
<proteinExistence type="inferred from homology"/>
<keyword id="KW-0665">Pyrimidine biosynthesis</keyword>
<keyword id="KW-0808">Transferase</keyword>
<feature type="chain" id="PRO_0000113209" description="Aspartate carbamoyltransferase catalytic subunit">
    <location>
        <begin position="1"/>
        <end position="311"/>
    </location>
</feature>
<feature type="binding site" evidence="1">
    <location>
        <position position="59"/>
    </location>
    <ligand>
        <name>carbamoyl phosphate</name>
        <dbReference type="ChEBI" id="CHEBI:58228"/>
    </ligand>
</feature>
<feature type="binding site" evidence="1">
    <location>
        <position position="60"/>
    </location>
    <ligand>
        <name>carbamoyl phosphate</name>
        <dbReference type="ChEBI" id="CHEBI:58228"/>
    </ligand>
</feature>
<feature type="binding site" evidence="1">
    <location>
        <position position="87"/>
    </location>
    <ligand>
        <name>L-aspartate</name>
        <dbReference type="ChEBI" id="CHEBI:29991"/>
    </ligand>
</feature>
<feature type="binding site" evidence="1">
    <location>
        <position position="109"/>
    </location>
    <ligand>
        <name>carbamoyl phosphate</name>
        <dbReference type="ChEBI" id="CHEBI:58228"/>
    </ligand>
</feature>
<feature type="binding site" evidence="1">
    <location>
        <position position="139"/>
    </location>
    <ligand>
        <name>carbamoyl phosphate</name>
        <dbReference type="ChEBI" id="CHEBI:58228"/>
    </ligand>
</feature>
<feature type="binding site" evidence="1">
    <location>
        <position position="142"/>
    </location>
    <ligand>
        <name>carbamoyl phosphate</name>
        <dbReference type="ChEBI" id="CHEBI:58228"/>
    </ligand>
</feature>
<feature type="binding site" evidence="1">
    <location>
        <position position="172"/>
    </location>
    <ligand>
        <name>L-aspartate</name>
        <dbReference type="ChEBI" id="CHEBI:29991"/>
    </ligand>
</feature>
<feature type="binding site" evidence="1">
    <location>
        <position position="224"/>
    </location>
    <ligand>
        <name>L-aspartate</name>
        <dbReference type="ChEBI" id="CHEBI:29991"/>
    </ligand>
</feature>
<feature type="binding site" evidence="1">
    <location>
        <position position="265"/>
    </location>
    <ligand>
        <name>carbamoyl phosphate</name>
        <dbReference type="ChEBI" id="CHEBI:58228"/>
    </ligand>
</feature>
<feature type="binding site" evidence="1">
    <location>
        <position position="266"/>
    </location>
    <ligand>
        <name>carbamoyl phosphate</name>
        <dbReference type="ChEBI" id="CHEBI:58228"/>
    </ligand>
</feature>
<name>PYRB_STRP3</name>
<reference key="1">
    <citation type="journal article" date="2002" name="Proc. Natl. Acad. Sci. U.S.A.">
        <title>Genome sequence of a serotype M3 strain of group A Streptococcus: phage-encoded toxins, the high-virulence phenotype, and clone emergence.</title>
        <authorList>
            <person name="Beres S.B."/>
            <person name="Sylva G.L."/>
            <person name="Barbian K.D."/>
            <person name="Lei B."/>
            <person name="Hoff J.S."/>
            <person name="Mammarella N.D."/>
            <person name="Liu M.-Y."/>
            <person name="Smoot J.C."/>
            <person name="Porcella S.F."/>
            <person name="Parkins L.D."/>
            <person name="Campbell D.S."/>
            <person name="Smith T.M."/>
            <person name="McCormick J.K."/>
            <person name="Leung D.Y.M."/>
            <person name="Schlievert P.M."/>
            <person name="Musser J.M."/>
        </authorList>
    </citation>
    <scope>NUCLEOTIDE SEQUENCE [LARGE SCALE GENOMIC DNA]</scope>
    <source>
        <strain>ATCC BAA-595 / MGAS315</strain>
    </source>
</reference>
<protein>
    <recommendedName>
        <fullName evidence="1">Aspartate carbamoyltransferase catalytic subunit</fullName>
        <ecNumber evidence="1">2.1.3.2</ecNumber>
    </recommendedName>
    <alternativeName>
        <fullName evidence="1">Aspartate transcarbamylase</fullName>
        <shortName evidence="1">ATCase</shortName>
    </alternativeName>
</protein>
<comment type="function">
    <text evidence="1">Catalyzes the condensation of carbamoyl phosphate and aspartate to form carbamoyl aspartate and inorganic phosphate, the committed step in the de novo pyrimidine nucleotide biosynthesis pathway.</text>
</comment>
<comment type="catalytic activity">
    <reaction evidence="1">
        <text>carbamoyl phosphate + L-aspartate = N-carbamoyl-L-aspartate + phosphate + H(+)</text>
        <dbReference type="Rhea" id="RHEA:20013"/>
        <dbReference type="ChEBI" id="CHEBI:15378"/>
        <dbReference type="ChEBI" id="CHEBI:29991"/>
        <dbReference type="ChEBI" id="CHEBI:32814"/>
        <dbReference type="ChEBI" id="CHEBI:43474"/>
        <dbReference type="ChEBI" id="CHEBI:58228"/>
        <dbReference type="EC" id="2.1.3.2"/>
    </reaction>
</comment>
<comment type="pathway">
    <text evidence="1">Pyrimidine metabolism; UMP biosynthesis via de novo pathway; (S)-dihydroorotate from bicarbonate: step 2/3.</text>
</comment>
<comment type="subunit">
    <text evidence="1">Heterododecamer (2C3:3R2) of six catalytic PyrB chains organized as two trimers (C3), and six regulatory PyrI chains organized as three dimers (R2).</text>
</comment>
<comment type="similarity">
    <text evidence="1">Belongs to the aspartate/ornithine carbamoyltransferase superfamily. ATCase family.</text>
</comment>
<sequence>MSVVNNRVALTNLVSMEALTTEEVLGLINRGSEYKAGKVVISDHQKDLVANLFFENSTRTHKSFEVAEKKLGLTVLDFNADASAVNKGESLYDTVLTMSALGTDICVIRHPEDDYYKELVESPTITASIVNGGDGSGQHPSQCLLDLLTIYEEFGRFEGLKIAIAGDLTHSRVAKSNMQILKRLGAELYFYGPEEWYSEAFNAYGTYIAIDQIIKELDVLMLLRVQHERHDGHQSFSKEGYHQAFGLTQERYQQLKDSAIIMHPAPVNRDVEIADSLVEAPKARIVSQMANGVFVRMAIIEAILNGRNKNS</sequence>
<dbReference type="EC" id="2.1.3.2" evidence="1"/>
<dbReference type="EMBL" id="AE014074">
    <property type="protein sequence ID" value="AAM79167.1"/>
    <property type="molecule type" value="Genomic_DNA"/>
</dbReference>
<dbReference type="RefSeq" id="WP_004218947.1">
    <property type="nucleotide sequence ID" value="NC_004070.1"/>
</dbReference>
<dbReference type="SMR" id="P0DC84"/>
<dbReference type="KEGG" id="spg:SpyM3_0560"/>
<dbReference type="HOGENOM" id="CLU_043846_2_1_9"/>
<dbReference type="UniPathway" id="UPA00070">
    <property type="reaction ID" value="UER00116"/>
</dbReference>
<dbReference type="Proteomes" id="UP000000564">
    <property type="component" value="Chromosome"/>
</dbReference>
<dbReference type="GO" id="GO:0005829">
    <property type="term" value="C:cytosol"/>
    <property type="evidence" value="ECO:0007669"/>
    <property type="project" value="TreeGrafter"/>
</dbReference>
<dbReference type="GO" id="GO:0016597">
    <property type="term" value="F:amino acid binding"/>
    <property type="evidence" value="ECO:0007669"/>
    <property type="project" value="InterPro"/>
</dbReference>
<dbReference type="GO" id="GO:0004070">
    <property type="term" value="F:aspartate carbamoyltransferase activity"/>
    <property type="evidence" value="ECO:0007669"/>
    <property type="project" value="UniProtKB-UniRule"/>
</dbReference>
<dbReference type="GO" id="GO:0006207">
    <property type="term" value="P:'de novo' pyrimidine nucleobase biosynthetic process"/>
    <property type="evidence" value="ECO:0007669"/>
    <property type="project" value="InterPro"/>
</dbReference>
<dbReference type="GO" id="GO:0044205">
    <property type="term" value="P:'de novo' UMP biosynthetic process"/>
    <property type="evidence" value="ECO:0007669"/>
    <property type="project" value="UniProtKB-UniRule"/>
</dbReference>
<dbReference type="GO" id="GO:0006520">
    <property type="term" value="P:amino acid metabolic process"/>
    <property type="evidence" value="ECO:0007669"/>
    <property type="project" value="InterPro"/>
</dbReference>
<dbReference type="FunFam" id="3.40.50.1370:FF:000011">
    <property type="entry name" value="Aspartate carbamoyltransferase"/>
    <property type="match status" value="1"/>
</dbReference>
<dbReference type="Gene3D" id="3.40.50.1370">
    <property type="entry name" value="Aspartate/ornithine carbamoyltransferase"/>
    <property type="match status" value="2"/>
</dbReference>
<dbReference type="HAMAP" id="MF_00001">
    <property type="entry name" value="Asp_carb_tr"/>
    <property type="match status" value="1"/>
</dbReference>
<dbReference type="InterPro" id="IPR006132">
    <property type="entry name" value="Asp/Orn_carbamoyltranf_P-bd"/>
</dbReference>
<dbReference type="InterPro" id="IPR006130">
    <property type="entry name" value="Asp/Orn_carbamoylTrfase"/>
</dbReference>
<dbReference type="InterPro" id="IPR036901">
    <property type="entry name" value="Asp/Orn_carbamoylTrfase_sf"/>
</dbReference>
<dbReference type="InterPro" id="IPR002082">
    <property type="entry name" value="Asp_carbamoyltransf"/>
</dbReference>
<dbReference type="InterPro" id="IPR006131">
    <property type="entry name" value="Asp_carbamoyltransf_Asp/Orn-bd"/>
</dbReference>
<dbReference type="NCBIfam" id="TIGR00670">
    <property type="entry name" value="asp_carb_tr"/>
    <property type="match status" value="1"/>
</dbReference>
<dbReference type="NCBIfam" id="NF002032">
    <property type="entry name" value="PRK00856.1"/>
    <property type="match status" value="1"/>
</dbReference>
<dbReference type="PANTHER" id="PTHR45753:SF6">
    <property type="entry name" value="ASPARTATE CARBAMOYLTRANSFERASE"/>
    <property type="match status" value="1"/>
</dbReference>
<dbReference type="PANTHER" id="PTHR45753">
    <property type="entry name" value="ORNITHINE CARBAMOYLTRANSFERASE, MITOCHONDRIAL"/>
    <property type="match status" value="1"/>
</dbReference>
<dbReference type="Pfam" id="PF00185">
    <property type="entry name" value="OTCace"/>
    <property type="match status" value="1"/>
</dbReference>
<dbReference type="Pfam" id="PF02729">
    <property type="entry name" value="OTCace_N"/>
    <property type="match status" value="1"/>
</dbReference>
<dbReference type="PRINTS" id="PR00100">
    <property type="entry name" value="AOTCASE"/>
</dbReference>
<dbReference type="PRINTS" id="PR00101">
    <property type="entry name" value="ATCASE"/>
</dbReference>
<dbReference type="SUPFAM" id="SSF53671">
    <property type="entry name" value="Aspartate/ornithine carbamoyltransferase"/>
    <property type="match status" value="1"/>
</dbReference>
<dbReference type="PROSITE" id="PS00097">
    <property type="entry name" value="CARBAMOYLTRANSFERASE"/>
    <property type="match status" value="1"/>
</dbReference>
<accession>P0DC84</accession>
<accession>P65621</accession>
<accession>Q9A0C8</accession>
<gene>
    <name evidence="1" type="primary">pyrB</name>
    <name type="ordered locus">SpyM3_0560</name>
</gene>